<comment type="function">
    <text evidence="1">Part of a complex that catalyzes the formation of methyl-coenzyme M and tetrahydromethanopterin from coenzyme M and methyl-tetrahydromethanopterin. This is an energy-conserving, sodium-ion translocating step. MtrH catalyzes the transfer of the methyl group from methyl-tetrahydromethanopterin to the corrinoid prosthetic group of MtrA.</text>
</comment>
<comment type="catalytic activity">
    <reaction>
        <text>5-methyl-5,6,7,8-tetrahydromethanopterin + coenzyme M + 2 Na(+)(in) = 5,6,7,8-tetrahydromethanopterin + methyl-coenzyme M + 2 Na(+)(out)</text>
        <dbReference type="Rhea" id="RHEA:53492"/>
        <dbReference type="ChEBI" id="CHEBI:29101"/>
        <dbReference type="ChEBI" id="CHEBI:58103"/>
        <dbReference type="ChEBI" id="CHEBI:58116"/>
        <dbReference type="ChEBI" id="CHEBI:58286"/>
        <dbReference type="ChEBI" id="CHEBI:58319"/>
        <dbReference type="EC" id="7.2.1.4"/>
    </reaction>
</comment>
<comment type="pathway">
    <text>One-carbon metabolism; methanogenesis from CO(2); methyl-coenzyme M from 5,10-methylene-5,6,7,8-tetrahydromethanopterin: step 2/2.</text>
</comment>
<comment type="subunit">
    <text evidence="1">The complex is composed of 8 subunits; MtrA, MtrB, MtrC, MtrD, MtrE, MtrF, MtrG and MtrH.</text>
</comment>
<comment type="similarity">
    <text evidence="2">Belongs to the MtrH family.</text>
</comment>
<sequence length="316" mass="34044">MFKFDKKQEVFELGGVKFGGQPGENPTVLVSTMFYARHKIVTDEDKGIFDRAAAETLWNTQVSLSDATGLPYVNQIVGETPESIKRYIEWFVGIDDRTPFLIDSSAGNVRAAAAQYCTEIGVADRAIHNSINASIEQSEIDVLTESDVSAAIVLAFNATDPTVKGKIDILEVGGSGQTKGMLQVAKECGIKYPIIDVAAMPLGAGSGATIRSVPTLKGKFGLPIGGGYHNMASAWDWLRKFKKTQPDPKAIYMPTDIGTNLVAQIAGSDYLLYGPIENVNQIFPAVAMVDIMLGETAKELGVEIADLENHPVTKLT</sequence>
<protein>
    <recommendedName>
        <fullName>Tetrahydromethanopterin S-methyltransferase subunit H</fullName>
        <ecNumber>7.2.1.4</ecNumber>
    </recommendedName>
    <alternativeName>
        <fullName>N5-methyltetrahydromethanopterin--coenzyme M methyltransferase subunit H</fullName>
    </alternativeName>
</protein>
<name>MTRH_METMA</name>
<feature type="chain" id="PRO_0000147565" description="Tetrahydromethanopterin S-methyltransferase subunit H">
    <location>
        <begin position="1"/>
        <end position="316"/>
    </location>
</feature>
<feature type="sequence conflict" description="In Ref. 1; AAC38337." evidence="2" ref="1">
    <original>N</original>
    <variation>D</variation>
    <location>
        <position position="59"/>
    </location>
</feature>
<feature type="sequence conflict" description="In Ref. 1; AAC38337." evidence="2" ref="1">
    <original>S</original>
    <variation>G</variation>
    <location>
        <position position="65"/>
    </location>
</feature>
<feature type="sequence conflict" description="In Ref. 1; AAC38337." evidence="2" ref="1">
    <original>VGE</original>
    <variation>CRG</variation>
    <location>
        <begin position="77"/>
        <end position="79"/>
    </location>
</feature>
<feature type="sequence conflict" description="In Ref. 1; AAC38337." evidence="2" ref="1">
    <original>F</original>
    <variation>V</variation>
    <location>
        <position position="91"/>
    </location>
</feature>
<feature type="sequence conflict" description="In Ref. 1; AAC38337." evidence="2" ref="1">
    <original>TPFLIDSSAGNV</original>
    <variation>HLSDRLSAER</variation>
    <location>
        <begin position="98"/>
        <end position="109"/>
    </location>
</feature>
<feature type="sequence conflict" description="In Ref. 1; AAC38337." evidence="2" ref="1">
    <original>I</original>
    <variation>L</variation>
    <location>
        <position position="131"/>
    </location>
</feature>
<feature type="sequence conflict" description="In Ref. 1; AAC38337." evidence="2" ref="1">
    <original>K</original>
    <variation>E</variation>
    <location>
        <position position="166"/>
    </location>
</feature>
<feature type="sequence conflict" description="In Ref. 1; AAC38337." evidence="2" ref="1">
    <original>D</original>
    <variation>A</variation>
    <location>
        <position position="290"/>
    </location>
</feature>
<feature type="sequence conflict" description="In Ref. 1; AAC38337." evidence="2" ref="1">
    <original>E</original>
    <variation>G</variation>
    <location>
        <position position="295"/>
    </location>
</feature>
<feature type="sequence conflict" description="In Ref. 1; AAC38337." evidence="2" ref="1">
    <original>L</original>
    <variation>W</variation>
    <location>
        <position position="307"/>
    </location>
</feature>
<dbReference type="EC" id="7.2.1.4"/>
<dbReference type="EMBL" id="AF042381">
    <property type="protein sequence ID" value="AAC38337.1"/>
    <property type="molecule type" value="Genomic_DNA"/>
</dbReference>
<dbReference type="EMBL" id="AE008384">
    <property type="protein sequence ID" value="AAM31236.1"/>
    <property type="molecule type" value="Genomic_DNA"/>
</dbReference>
<dbReference type="RefSeq" id="WP_011033486.1">
    <property type="nucleotide sequence ID" value="NC_003901.1"/>
</dbReference>
<dbReference type="SMR" id="P80650"/>
<dbReference type="GeneID" id="82160590"/>
<dbReference type="KEGG" id="mma:MM_1540"/>
<dbReference type="PATRIC" id="fig|192952.21.peg.1781"/>
<dbReference type="eggNOG" id="arCOG04336">
    <property type="taxonomic scope" value="Archaea"/>
</dbReference>
<dbReference type="HOGENOM" id="CLU_048697_0_0_2"/>
<dbReference type="BRENDA" id="2.1.1.86">
    <property type="organism ID" value="3270"/>
</dbReference>
<dbReference type="UniPathway" id="UPA00640">
    <property type="reaction ID" value="UER00698"/>
</dbReference>
<dbReference type="Proteomes" id="UP000000595">
    <property type="component" value="Chromosome"/>
</dbReference>
<dbReference type="GO" id="GO:0030269">
    <property type="term" value="F:tetrahydromethanopterin S-methyltransferase activity"/>
    <property type="evidence" value="ECO:0007669"/>
    <property type="project" value="UniProtKB-UniRule"/>
</dbReference>
<dbReference type="GO" id="GO:0019386">
    <property type="term" value="P:methanogenesis, from carbon dioxide"/>
    <property type="evidence" value="ECO:0007669"/>
    <property type="project" value="UniProtKB-UniRule"/>
</dbReference>
<dbReference type="GO" id="GO:0032259">
    <property type="term" value="P:methylation"/>
    <property type="evidence" value="ECO:0007669"/>
    <property type="project" value="UniProtKB-KW"/>
</dbReference>
<dbReference type="GO" id="GO:0006730">
    <property type="term" value="P:one-carbon metabolic process"/>
    <property type="evidence" value="ECO:0007669"/>
    <property type="project" value="UniProtKB-UniRule"/>
</dbReference>
<dbReference type="HAMAP" id="MF_01501">
    <property type="entry name" value="MtrH"/>
    <property type="match status" value="1"/>
</dbReference>
<dbReference type="InterPro" id="IPR011005">
    <property type="entry name" value="Dihydropteroate_synth-like_sf"/>
</dbReference>
<dbReference type="InterPro" id="IPR023467">
    <property type="entry name" value="MeTrfase_MtrH/MtxH"/>
</dbReference>
<dbReference type="InterPro" id="IPR028342">
    <property type="entry name" value="MtrH"/>
</dbReference>
<dbReference type="NCBIfam" id="TIGR01114">
    <property type="entry name" value="mtrH"/>
    <property type="match status" value="1"/>
</dbReference>
<dbReference type="Pfam" id="PF02007">
    <property type="entry name" value="MtrH"/>
    <property type="match status" value="1"/>
</dbReference>
<dbReference type="PIRSF" id="PIRSF500206">
    <property type="entry name" value="MtrH"/>
    <property type="match status" value="1"/>
</dbReference>
<dbReference type="PIRSF" id="PIRSF004960">
    <property type="entry name" value="MtrH_MtxH"/>
    <property type="match status" value="1"/>
</dbReference>
<dbReference type="SUPFAM" id="SSF51717">
    <property type="entry name" value="Dihydropteroate synthetase-like"/>
    <property type="match status" value="1"/>
</dbReference>
<organism>
    <name type="scientific">Methanosarcina mazei (strain ATCC BAA-159 / DSM 3647 / Goe1 / Go1 / JCM 11833 / OCM 88)</name>
    <name type="common">Methanosarcina frisia</name>
    <dbReference type="NCBI Taxonomy" id="192952"/>
    <lineage>
        <taxon>Archaea</taxon>
        <taxon>Methanobacteriati</taxon>
        <taxon>Methanobacteriota</taxon>
        <taxon>Stenosarchaea group</taxon>
        <taxon>Methanomicrobia</taxon>
        <taxon>Methanosarcinales</taxon>
        <taxon>Methanosarcinaceae</taxon>
        <taxon>Methanosarcina</taxon>
    </lineage>
</organism>
<gene>
    <name type="primary">mtrH</name>
    <name type="ordered locus">MM_1540</name>
</gene>
<proteinExistence type="evidence at protein level"/>
<reference key="1">
    <citation type="journal article" date="1998" name="FEBS Lett.">
        <title>Cloning, sequencing and expression of the genes encoding the sodium translocating N5-methyltetrahydromethanopterin:coenzyme M methyltransferase of the methylotrophic archaeon Methanosarcina mazei Go1.</title>
        <authorList>
            <person name="Lienard T."/>
            <person name="Gottschalk G."/>
        </authorList>
    </citation>
    <scope>NUCLEOTIDE SEQUENCE [GENOMIC DNA]</scope>
    <source>
        <strain>ATCC BAA-159 / DSM 3647 / Goe1 / Go1 / JCM 11833 / OCM 88</strain>
    </source>
</reference>
<reference key="2">
    <citation type="journal article" date="2002" name="J. Mol. Microbiol. Biotechnol.">
        <title>The genome of Methanosarcina mazei: evidence for lateral gene transfer between Bacteria and Archaea.</title>
        <authorList>
            <person name="Deppenmeier U."/>
            <person name="Johann A."/>
            <person name="Hartsch T."/>
            <person name="Merkl R."/>
            <person name="Schmitz R.A."/>
            <person name="Martinez-Arias R."/>
            <person name="Henne A."/>
            <person name="Wiezer A."/>
            <person name="Baeumer S."/>
            <person name="Jacobi C."/>
            <person name="Brueggemann H."/>
            <person name="Lienard T."/>
            <person name="Christmann A."/>
            <person name="Boemecke M."/>
            <person name="Steckel S."/>
            <person name="Bhattacharyya A."/>
            <person name="Lykidis A."/>
            <person name="Overbeek R."/>
            <person name="Klenk H.-P."/>
            <person name="Gunsalus R.P."/>
            <person name="Fritz H.-J."/>
            <person name="Gottschalk G."/>
        </authorList>
    </citation>
    <scope>NUCLEOTIDE SEQUENCE [LARGE SCALE GENOMIC DNA]</scope>
    <source>
        <strain>ATCC BAA-159 / DSM 3647 / Goe1 / Go1 / JCM 11833 / OCM 88</strain>
    </source>
</reference>
<reference key="3">
    <citation type="journal article" date="1996" name="Eur. J. Biochem.">
        <title>Sodium ion translocation by N5-methyltetrahydromethanopterin: coenzyme M methyltransferase from Methanosarcina mazei Go1 reconstituted in ether lipid liposomes.</title>
        <authorList>
            <person name="Lienard T."/>
            <person name="Becher B."/>
            <person name="Marschall M."/>
            <person name="Bowien S."/>
            <person name="Gottschalk G."/>
        </authorList>
    </citation>
    <scope>PROTEIN SEQUENCE OF 1-14</scope>
    <source>
        <strain>ATCC BAA-159 / DSM 3647 / Goe1 / Go1 / JCM 11833 / OCM 88</strain>
    </source>
</reference>
<evidence type="ECO:0000250" key="1"/>
<evidence type="ECO:0000305" key="2"/>
<accession>P80650</accession>
<accession>O59643</accession>
<keyword id="KW-0903">Direct protein sequencing</keyword>
<keyword id="KW-0484">Methanogenesis</keyword>
<keyword id="KW-0489">Methyltransferase</keyword>
<keyword id="KW-0554">One-carbon metabolism</keyword>
<keyword id="KW-0808">Transferase</keyword>
<keyword id="KW-1278">Translocase</keyword>